<accession>B0VDG6</accession>
<gene>
    <name evidence="1" type="primary">rplK</name>
    <name type="ordered locus">ABAYE3493</name>
</gene>
<comment type="function">
    <text evidence="1">Forms part of the ribosomal stalk which helps the ribosome interact with GTP-bound translation factors.</text>
</comment>
<comment type="subunit">
    <text evidence="1">Part of the ribosomal stalk of the 50S ribosomal subunit. Interacts with L10 and the large rRNA to form the base of the stalk. L10 forms an elongated spine to which L12 dimers bind in a sequential fashion forming a multimeric L10(L12)X complex.</text>
</comment>
<comment type="PTM">
    <text evidence="1">One or more lysine residues are methylated.</text>
</comment>
<comment type="similarity">
    <text evidence="1">Belongs to the universal ribosomal protein uL11 family.</text>
</comment>
<name>RL11_ACIBY</name>
<dbReference type="EMBL" id="CU459141">
    <property type="protein sequence ID" value="CAM88281.1"/>
    <property type="molecule type" value="Genomic_DNA"/>
</dbReference>
<dbReference type="RefSeq" id="WP_001074682.1">
    <property type="nucleotide sequence ID" value="NZ_JBDGFB010000003.1"/>
</dbReference>
<dbReference type="SMR" id="B0VDG6"/>
<dbReference type="EnsemblBacteria" id="CAM88281">
    <property type="protein sequence ID" value="CAM88281"/>
    <property type="gene ID" value="ABAYE3493"/>
</dbReference>
<dbReference type="GeneID" id="9384044"/>
<dbReference type="KEGG" id="aby:ABAYE3493"/>
<dbReference type="HOGENOM" id="CLU_074237_2_1_6"/>
<dbReference type="GO" id="GO:0022625">
    <property type="term" value="C:cytosolic large ribosomal subunit"/>
    <property type="evidence" value="ECO:0007669"/>
    <property type="project" value="TreeGrafter"/>
</dbReference>
<dbReference type="GO" id="GO:0070180">
    <property type="term" value="F:large ribosomal subunit rRNA binding"/>
    <property type="evidence" value="ECO:0007669"/>
    <property type="project" value="UniProtKB-UniRule"/>
</dbReference>
<dbReference type="GO" id="GO:0003735">
    <property type="term" value="F:structural constituent of ribosome"/>
    <property type="evidence" value="ECO:0007669"/>
    <property type="project" value="InterPro"/>
</dbReference>
<dbReference type="GO" id="GO:0006412">
    <property type="term" value="P:translation"/>
    <property type="evidence" value="ECO:0007669"/>
    <property type="project" value="UniProtKB-UniRule"/>
</dbReference>
<dbReference type="CDD" id="cd00349">
    <property type="entry name" value="Ribosomal_L11"/>
    <property type="match status" value="1"/>
</dbReference>
<dbReference type="FunFam" id="1.10.10.250:FF:000001">
    <property type="entry name" value="50S ribosomal protein L11"/>
    <property type="match status" value="1"/>
</dbReference>
<dbReference type="FunFam" id="3.30.1550.10:FF:000001">
    <property type="entry name" value="50S ribosomal protein L11"/>
    <property type="match status" value="1"/>
</dbReference>
<dbReference type="Gene3D" id="1.10.10.250">
    <property type="entry name" value="Ribosomal protein L11, C-terminal domain"/>
    <property type="match status" value="1"/>
</dbReference>
<dbReference type="Gene3D" id="3.30.1550.10">
    <property type="entry name" value="Ribosomal protein L11/L12, N-terminal domain"/>
    <property type="match status" value="1"/>
</dbReference>
<dbReference type="HAMAP" id="MF_00736">
    <property type="entry name" value="Ribosomal_uL11"/>
    <property type="match status" value="1"/>
</dbReference>
<dbReference type="InterPro" id="IPR000911">
    <property type="entry name" value="Ribosomal_uL11"/>
</dbReference>
<dbReference type="InterPro" id="IPR006519">
    <property type="entry name" value="Ribosomal_uL11_bac-typ"/>
</dbReference>
<dbReference type="InterPro" id="IPR020783">
    <property type="entry name" value="Ribosomal_uL11_C"/>
</dbReference>
<dbReference type="InterPro" id="IPR036769">
    <property type="entry name" value="Ribosomal_uL11_C_sf"/>
</dbReference>
<dbReference type="InterPro" id="IPR020785">
    <property type="entry name" value="Ribosomal_uL11_CS"/>
</dbReference>
<dbReference type="InterPro" id="IPR020784">
    <property type="entry name" value="Ribosomal_uL11_N"/>
</dbReference>
<dbReference type="InterPro" id="IPR036796">
    <property type="entry name" value="Ribosomal_uL11_N_sf"/>
</dbReference>
<dbReference type="NCBIfam" id="TIGR01632">
    <property type="entry name" value="L11_bact"/>
    <property type="match status" value="1"/>
</dbReference>
<dbReference type="PANTHER" id="PTHR11661">
    <property type="entry name" value="60S RIBOSOMAL PROTEIN L12"/>
    <property type="match status" value="1"/>
</dbReference>
<dbReference type="PANTHER" id="PTHR11661:SF1">
    <property type="entry name" value="LARGE RIBOSOMAL SUBUNIT PROTEIN UL11M"/>
    <property type="match status" value="1"/>
</dbReference>
<dbReference type="Pfam" id="PF00298">
    <property type="entry name" value="Ribosomal_L11"/>
    <property type="match status" value="1"/>
</dbReference>
<dbReference type="Pfam" id="PF03946">
    <property type="entry name" value="Ribosomal_L11_N"/>
    <property type="match status" value="1"/>
</dbReference>
<dbReference type="SMART" id="SM00649">
    <property type="entry name" value="RL11"/>
    <property type="match status" value="1"/>
</dbReference>
<dbReference type="SUPFAM" id="SSF54747">
    <property type="entry name" value="Ribosomal L11/L12e N-terminal domain"/>
    <property type="match status" value="1"/>
</dbReference>
<dbReference type="SUPFAM" id="SSF46906">
    <property type="entry name" value="Ribosomal protein L11, C-terminal domain"/>
    <property type="match status" value="1"/>
</dbReference>
<dbReference type="PROSITE" id="PS00359">
    <property type="entry name" value="RIBOSOMAL_L11"/>
    <property type="match status" value="1"/>
</dbReference>
<protein>
    <recommendedName>
        <fullName evidence="1">Large ribosomal subunit protein uL11</fullName>
    </recommendedName>
    <alternativeName>
        <fullName evidence="2">50S ribosomal protein L11</fullName>
    </alternativeName>
</protein>
<keyword id="KW-0488">Methylation</keyword>
<keyword id="KW-0687">Ribonucleoprotein</keyword>
<keyword id="KW-0689">Ribosomal protein</keyword>
<keyword id="KW-0694">RNA-binding</keyword>
<keyword id="KW-0699">rRNA-binding</keyword>
<feature type="chain" id="PRO_1000132851" description="Large ribosomal subunit protein uL11">
    <location>
        <begin position="1"/>
        <end position="142"/>
    </location>
</feature>
<organism>
    <name type="scientific">Acinetobacter baumannii (strain AYE)</name>
    <dbReference type="NCBI Taxonomy" id="509173"/>
    <lineage>
        <taxon>Bacteria</taxon>
        <taxon>Pseudomonadati</taxon>
        <taxon>Pseudomonadota</taxon>
        <taxon>Gammaproteobacteria</taxon>
        <taxon>Moraxellales</taxon>
        <taxon>Moraxellaceae</taxon>
        <taxon>Acinetobacter</taxon>
        <taxon>Acinetobacter calcoaceticus/baumannii complex</taxon>
    </lineage>
</organism>
<proteinExistence type="inferred from homology"/>
<sequence>MAKKIDGYIKLQVPAGKANPSPPIGPALGQRGVNIMAFCKEFNAATQKVEPGLPIPVVITVYNDKSFTFIMKTPPASILLKKAAGIQKGSSVPNKTKVGKLTRAQLEEIATTKEPDLTGADLDARVRTIAGSARSMGLEVEL</sequence>
<reference key="1">
    <citation type="journal article" date="2008" name="PLoS ONE">
        <title>Comparative analysis of Acinetobacters: three genomes for three lifestyles.</title>
        <authorList>
            <person name="Vallenet D."/>
            <person name="Nordmann P."/>
            <person name="Barbe V."/>
            <person name="Poirel L."/>
            <person name="Mangenot S."/>
            <person name="Bataille E."/>
            <person name="Dossat C."/>
            <person name="Gas S."/>
            <person name="Kreimeyer A."/>
            <person name="Lenoble P."/>
            <person name="Oztas S."/>
            <person name="Poulain J."/>
            <person name="Segurens B."/>
            <person name="Robert C."/>
            <person name="Abergel C."/>
            <person name="Claverie J.-M."/>
            <person name="Raoult D."/>
            <person name="Medigue C."/>
            <person name="Weissenbach J."/>
            <person name="Cruveiller S."/>
        </authorList>
    </citation>
    <scope>NUCLEOTIDE SEQUENCE [LARGE SCALE GENOMIC DNA]</scope>
    <source>
        <strain>AYE</strain>
    </source>
</reference>
<evidence type="ECO:0000255" key="1">
    <source>
        <dbReference type="HAMAP-Rule" id="MF_00736"/>
    </source>
</evidence>
<evidence type="ECO:0000305" key="2"/>